<organism>
    <name type="scientific">Aspergillus fumigatus (strain CBS 144.89 / FGSC A1163 / CEA10)</name>
    <name type="common">Neosartorya fumigata</name>
    <dbReference type="NCBI Taxonomy" id="451804"/>
    <lineage>
        <taxon>Eukaryota</taxon>
        <taxon>Fungi</taxon>
        <taxon>Dikarya</taxon>
        <taxon>Ascomycota</taxon>
        <taxon>Pezizomycotina</taxon>
        <taxon>Eurotiomycetes</taxon>
        <taxon>Eurotiomycetidae</taxon>
        <taxon>Eurotiales</taxon>
        <taxon>Aspergillaceae</taxon>
        <taxon>Aspergillus</taxon>
        <taxon>Aspergillus subgen. Fumigati</taxon>
    </lineage>
</organism>
<dbReference type="EC" id="3.2.1.21"/>
<dbReference type="EMBL" id="DS499601">
    <property type="protein sequence ID" value="EDP47974.1"/>
    <property type="molecule type" value="Genomic_DNA"/>
</dbReference>
<dbReference type="SMR" id="B0YBJ3"/>
<dbReference type="GlyCosmos" id="B0YBJ3">
    <property type="glycosylation" value="4 sites, No reported glycans"/>
</dbReference>
<dbReference type="EnsemblFungi" id="EDP47974">
    <property type="protein sequence ID" value="EDP47974"/>
    <property type="gene ID" value="AFUB_086800"/>
</dbReference>
<dbReference type="VEuPathDB" id="FungiDB:AFUB_086800"/>
<dbReference type="HOGENOM" id="CLU_004542_4_0_1"/>
<dbReference type="OrthoDB" id="102387at5052"/>
<dbReference type="PhylomeDB" id="B0YBJ3"/>
<dbReference type="UniPathway" id="UPA00696"/>
<dbReference type="Proteomes" id="UP000001699">
    <property type="component" value="Unassembled WGS sequence"/>
</dbReference>
<dbReference type="GO" id="GO:0005576">
    <property type="term" value="C:extracellular region"/>
    <property type="evidence" value="ECO:0007669"/>
    <property type="project" value="UniProtKB-SubCell"/>
</dbReference>
<dbReference type="GO" id="GO:0008422">
    <property type="term" value="F:beta-glucosidase activity"/>
    <property type="evidence" value="ECO:0007669"/>
    <property type="project" value="UniProtKB-EC"/>
</dbReference>
<dbReference type="GO" id="GO:0030245">
    <property type="term" value="P:cellulose catabolic process"/>
    <property type="evidence" value="ECO:0007669"/>
    <property type="project" value="UniProtKB-UniPathway"/>
</dbReference>
<dbReference type="FunFam" id="2.60.120.260:FF:000249">
    <property type="entry name" value="Probable beta-glucosidase K"/>
    <property type="match status" value="1"/>
</dbReference>
<dbReference type="Gene3D" id="2.60.120.260">
    <property type="entry name" value="Galactose-binding domain-like"/>
    <property type="match status" value="1"/>
</dbReference>
<dbReference type="Gene3D" id="3.40.50.1700">
    <property type="entry name" value="Glycoside hydrolase family 3 C-terminal domain"/>
    <property type="match status" value="1"/>
</dbReference>
<dbReference type="Gene3D" id="3.20.20.300">
    <property type="entry name" value="Glycoside hydrolase, family 3, N-terminal domain"/>
    <property type="match status" value="2"/>
</dbReference>
<dbReference type="InterPro" id="IPR050288">
    <property type="entry name" value="Cellulose_deg_GH3"/>
</dbReference>
<dbReference type="InterPro" id="IPR019800">
    <property type="entry name" value="Glyco_hydro_3_AS"/>
</dbReference>
<dbReference type="InterPro" id="IPR002772">
    <property type="entry name" value="Glyco_hydro_3_C"/>
</dbReference>
<dbReference type="InterPro" id="IPR036881">
    <property type="entry name" value="Glyco_hydro_3_C_sf"/>
</dbReference>
<dbReference type="InterPro" id="IPR001764">
    <property type="entry name" value="Glyco_hydro_3_N"/>
</dbReference>
<dbReference type="InterPro" id="IPR036962">
    <property type="entry name" value="Glyco_hydro_3_N_sf"/>
</dbReference>
<dbReference type="InterPro" id="IPR017853">
    <property type="entry name" value="Glycoside_hydrolase_SF"/>
</dbReference>
<dbReference type="InterPro" id="IPR037524">
    <property type="entry name" value="PA14/GLEYA"/>
</dbReference>
<dbReference type="InterPro" id="IPR011658">
    <property type="entry name" value="PA14_dom"/>
</dbReference>
<dbReference type="PANTHER" id="PTHR42715">
    <property type="entry name" value="BETA-GLUCOSIDASE"/>
    <property type="match status" value="1"/>
</dbReference>
<dbReference type="PANTHER" id="PTHR42715:SF13">
    <property type="entry name" value="BETA-GLUCOSIDASE K-RELATED"/>
    <property type="match status" value="1"/>
</dbReference>
<dbReference type="Pfam" id="PF00933">
    <property type="entry name" value="Glyco_hydro_3"/>
    <property type="match status" value="1"/>
</dbReference>
<dbReference type="Pfam" id="PF01915">
    <property type="entry name" value="Glyco_hydro_3_C"/>
    <property type="match status" value="1"/>
</dbReference>
<dbReference type="Pfam" id="PF07691">
    <property type="entry name" value="PA14"/>
    <property type="match status" value="1"/>
</dbReference>
<dbReference type="PRINTS" id="PR00133">
    <property type="entry name" value="GLHYDRLASE3"/>
</dbReference>
<dbReference type="SMART" id="SM00758">
    <property type="entry name" value="PA14"/>
    <property type="match status" value="1"/>
</dbReference>
<dbReference type="SUPFAM" id="SSF51445">
    <property type="entry name" value="(Trans)glycosidases"/>
    <property type="match status" value="1"/>
</dbReference>
<dbReference type="SUPFAM" id="SSF52279">
    <property type="entry name" value="Beta-D-glucan exohydrolase, C-terminal domain"/>
    <property type="match status" value="1"/>
</dbReference>
<dbReference type="PROSITE" id="PS00775">
    <property type="entry name" value="GLYCOSYL_HYDROL_F3"/>
    <property type="match status" value="1"/>
</dbReference>
<dbReference type="PROSITE" id="PS51820">
    <property type="entry name" value="PA14"/>
    <property type="match status" value="1"/>
</dbReference>
<sequence>MGEICPRREDFDIDYILKNASLLEKVSLLAGYDFWHTAPLPRFNVPSVRVSDGPNGVRGTKFFDGVRAACLPCGTGLAATWDQSLLYDAGVLIGQDVYPTAAYIRGAQSTGVISTIKHFAANDQEHERISVNAVMSERALREVHLLPFQIAIADSAPGAVMTCYNKVNGQHLSESKEMLDGLLRREWGWKGLIMSDWFGTYSTAEALNAGLDLEMPGPTRLRGPLLELAISSRKVSRATLDERARTVLEFVQRARKAEVSAVESTRDFPEDRRLNRKLAADSIVLLKNESGLLPLNPQTLTSVALIGPNMKTAAFCGGGSASLQPYYSTSPYQGITSQLPPGVEVLYETGATSYAFIPELAASEVRTPEGQPGLGMRFYRDPPSVQERRVVEETIIQESSWQLMGFSNPELDRLFHADIEAELIAPATGPFQFGLAVYGSASLFLDDQLIIDNTTVQRGGTFFFGKGTLEETATVDLVQGQSYQIKVQFASGPSSKLVKPGVVNFGGGAGRLGMVQVVDPERAIARAVEAAKRADITILGVGLTRDHESEGFDRSHMDLPPAVASLVTAVLDVAPDAILLTQSGTPFSMLPWADLVKTHLHAWFGGNELGNGIADVLFGVVNPSGKLPLSFPRRIEDTPTYLNFGSERGQVTYGEGIYVGYKLLRKSPTSCALSIRVRSAPVHPCCFRSNSLLTRFVPQARFVVHLLCVLRFDGRHRVRYTECSKLGRRGRSGSSPAVYRGRSNNVVNRTSHQGAQRISKGGFAAR</sequence>
<name>BGLK_ASPFC</name>
<evidence type="ECO:0000250" key="1"/>
<evidence type="ECO:0000255" key="2"/>
<evidence type="ECO:0000255" key="3">
    <source>
        <dbReference type="PROSITE-ProRule" id="PRU01164"/>
    </source>
</evidence>
<evidence type="ECO:0000256" key="4">
    <source>
        <dbReference type="SAM" id="MobiDB-lite"/>
    </source>
</evidence>
<evidence type="ECO:0000305" key="5"/>
<accession>B0YBJ3</accession>
<proteinExistence type="inferred from homology"/>
<protein>
    <recommendedName>
        <fullName>Probable beta-glucosidase K</fullName>
        <ecNumber>3.2.1.21</ecNumber>
    </recommendedName>
    <alternativeName>
        <fullName>Beta-D-glucoside glucohydrolase K</fullName>
    </alternativeName>
    <alternativeName>
        <fullName>Cellobiase K</fullName>
    </alternativeName>
    <alternativeName>
        <fullName>Gentiobiase K</fullName>
    </alternativeName>
</protein>
<keyword id="KW-0119">Carbohydrate metabolism</keyword>
<keyword id="KW-0136">Cellulose degradation</keyword>
<keyword id="KW-0325">Glycoprotein</keyword>
<keyword id="KW-0326">Glycosidase</keyword>
<keyword id="KW-0378">Hydrolase</keyword>
<keyword id="KW-0624">Polysaccharide degradation</keyword>
<keyword id="KW-0964">Secreted</keyword>
<feature type="chain" id="PRO_0000394896" description="Probable beta-glucosidase K">
    <location>
        <begin position="1"/>
        <end position="766"/>
    </location>
</feature>
<feature type="domain" description="PA14" evidence="3">
    <location>
        <begin position="369"/>
        <end position="528"/>
    </location>
</feature>
<feature type="region of interest" description="Disordered" evidence="4">
    <location>
        <begin position="726"/>
        <end position="766"/>
    </location>
</feature>
<feature type="compositionally biased region" description="Polar residues" evidence="4">
    <location>
        <begin position="742"/>
        <end position="756"/>
    </location>
</feature>
<feature type="active site" evidence="1">
    <location>
        <position position="196"/>
    </location>
</feature>
<feature type="glycosylation site" description="N-linked (GlcNAc...) asparagine" evidence="2">
    <location>
        <position position="19"/>
    </location>
</feature>
<feature type="glycosylation site" description="N-linked (GlcNAc...) asparagine" evidence="2">
    <location>
        <position position="288"/>
    </location>
</feature>
<feature type="glycosylation site" description="N-linked (GlcNAc...) asparagine" evidence="2">
    <location>
        <position position="453"/>
    </location>
</feature>
<feature type="glycosylation site" description="N-linked (GlcNAc...) asparagine" evidence="2">
    <location>
        <position position="748"/>
    </location>
</feature>
<comment type="function">
    <text evidence="1">Beta-glucosidases are one of a number of cellulolytic enzymes involved in the degradation of cellulosic biomass. Catalyzes the last step releasing glucose from the inhibitory cellobiose (By similarity).</text>
</comment>
<comment type="catalytic activity">
    <reaction>
        <text>Hydrolysis of terminal, non-reducing beta-D-glucosyl residues with release of beta-D-glucose.</text>
        <dbReference type="EC" id="3.2.1.21"/>
    </reaction>
</comment>
<comment type="pathway">
    <text>Glycan metabolism; cellulose degradation.</text>
</comment>
<comment type="subcellular location">
    <subcellularLocation>
        <location evidence="1">Secreted</location>
    </subcellularLocation>
</comment>
<comment type="similarity">
    <text evidence="5">Belongs to the glycosyl hydrolase 3 family.</text>
</comment>
<reference key="1">
    <citation type="journal article" date="2008" name="PLoS Genet.">
        <title>Genomic islands in the pathogenic filamentous fungus Aspergillus fumigatus.</title>
        <authorList>
            <person name="Fedorova N.D."/>
            <person name="Khaldi N."/>
            <person name="Joardar V.S."/>
            <person name="Maiti R."/>
            <person name="Amedeo P."/>
            <person name="Anderson M.J."/>
            <person name="Crabtree J."/>
            <person name="Silva J.C."/>
            <person name="Badger J.H."/>
            <person name="Albarraq A."/>
            <person name="Angiuoli S."/>
            <person name="Bussey H."/>
            <person name="Bowyer P."/>
            <person name="Cotty P.J."/>
            <person name="Dyer P.S."/>
            <person name="Egan A."/>
            <person name="Galens K."/>
            <person name="Fraser-Liggett C.M."/>
            <person name="Haas B.J."/>
            <person name="Inman J.M."/>
            <person name="Kent R."/>
            <person name="Lemieux S."/>
            <person name="Malavazi I."/>
            <person name="Orvis J."/>
            <person name="Roemer T."/>
            <person name="Ronning C.M."/>
            <person name="Sundaram J.P."/>
            <person name="Sutton G."/>
            <person name="Turner G."/>
            <person name="Venter J.C."/>
            <person name="White O.R."/>
            <person name="Whitty B.R."/>
            <person name="Youngman P."/>
            <person name="Wolfe K.H."/>
            <person name="Goldman G.H."/>
            <person name="Wortman J.R."/>
            <person name="Jiang B."/>
            <person name="Denning D.W."/>
            <person name="Nierman W.C."/>
        </authorList>
    </citation>
    <scope>NUCLEOTIDE SEQUENCE [LARGE SCALE GENOMIC DNA]</scope>
    <source>
        <strain>CBS 144.89 / FGSC A1163 / CEA10</strain>
    </source>
</reference>
<gene>
    <name type="primary">bglK</name>
    <name type="ORF">AFUB_086800</name>
</gene>